<evidence type="ECO:0000255" key="1">
    <source>
        <dbReference type="HAMAP-Rule" id="MF_01321"/>
    </source>
</evidence>
<evidence type="ECO:0000256" key="2">
    <source>
        <dbReference type="SAM" id="MobiDB-lite"/>
    </source>
</evidence>
<comment type="function">
    <text evidence="1">DNA-dependent RNA polymerase catalyzes the transcription of DNA into RNA using the four ribonucleoside triphosphates as substrates.</text>
</comment>
<comment type="catalytic activity">
    <reaction evidence="1">
        <text>RNA(n) + a ribonucleoside 5'-triphosphate = RNA(n+1) + diphosphate</text>
        <dbReference type="Rhea" id="RHEA:21248"/>
        <dbReference type="Rhea" id="RHEA-COMP:14527"/>
        <dbReference type="Rhea" id="RHEA-COMP:17342"/>
        <dbReference type="ChEBI" id="CHEBI:33019"/>
        <dbReference type="ChEBI" id="CHEBI:61557"/>
        <dbReference type="ChEBI" id="CHEBI:140395"/>
        <dbReference type="EC" id="2.7.7.6"/>
    </reaction>
</comment>
<comment type="subunit">
    <text evidence="1">The RNAP catalytic core consists of 2 alpha, 1 beta, 1 beta' and 1 omega subunit. When a sigma factor is associated with the core the holoenzyme is formed, which can initiate transcription.</text>
</comment>
<comment type="similarity">
    <text evidence="1">Belongs to the RNA polymerase beta chain family.</text>
</comment>
<gene>
    <name evidence="1" type="primary">rpoB</name>
    <name type="ordered locus">SAK_0223</name>
</gene>
<protein>
    <recommendedName>
        <fullName evidence="1">DNA-directed RNA polymerase subunit beta</fullName>
        <shortName evidence="1">RNAP subunit beta</shortName>
        <ecNumber evidence="1">2.7.7.6</ecNumber>
    </recommendedName>
    <alternativeName>
        <fullName evidence="1">RNA polymerase subunit beta</fullName>
    </alternativeName>
    <alternativeName>
        <fullName evidence="1">Transcriptase subunit beta</fullName>
    </alternativeName>
</protein>
<keyword id="KW-0240">DNA-directed RNA polymerase</keyword>
<keyword id="KW-0548">Nucleotidyltransferase</keyword>
<keyword id="KW-0804">Transcription</keyword>
<keyword id="KW-0808">Transferase</keyword>
<sequence>MAGHEVQYGKHRTRRSFSRIKEVLDLPNLIEIQTDSFQDFLDAGLKEVFEDVLPISNFTDTMDLEFVGYELKEPKYTLEEARIHDASYSAPIFVTFRLVNKETGEIKTQEVFFGDFPIMTEMGTFIINGGERIIVSQLVRSPGVYFNDKVDKNGKVGYGSTVIPNRGAWLELETDAKDIAYTRIDRTRKIPFTTLVRALGFSGDDEIVDIFGDSELVRNTIEKDIHKNPSDSRTDEALKEIYERLRPGEPKTADSSRSLLVARFFDPRRYDLAAVGRYKINKKLNLKTRLLNQTIAENLVDGETGEILVEAGTVMTRDVIDSIAEHIDGDLNKFVYTPNDYAVVTEPVILQKFKVVAPTDPDRVVTIVGNSNPEDKVRALTPADILAEMSYFLNLAEGIGKVDDIDHLGNRRIRAVGELLANQFRIGLARMERNVRERMSVQDNEVLTPQQIINIRPVTAAVKEFFGSSQLSQFMDQHNPLSELSHKRRLSALGPGGLTRDRAGYEVRDVHYTHYGRMCPIETPEGPNIGLINNLSSFGHLNKYGFIQTPYRKVDRSTGAVTNEIVWLTADEEDEFTVAQANSKLNEDGTFAEEIVMGRHQGNNQEFPSSIVDFVDVSPKQVVAVATACIPFLENDDSNRALMGANMQRQAVPLIDPKAPYVGTGMEYQAAHDSGAAVIAKHDGRVIFSDAEKVEVRREDGSLDVYHVQKFRRSNSGTAYNQRTLVKVGDLVEKGDFIADGPSMENGEMALGQNPVVAYMTWEGYNFEDAVIMSERLVKEDVYTSVHLEEFESETRDTKLGPEEITREIPNVGEDSLRDLDEMGIIRIGAEVKEGDILVGKVTPKGEKDLSAEERLLHAIFGDKSREVRDTSLRVPHGGDGVVRDVKIFTRANGDELQSGVNMLVRVYIAQKRKIKVGDKMAGRHGNKGVVSRIVPVEDMPYLPDGTPVDIMLNPLGVPSRMNIGQVMELHLGMAARNLGIHIATPVFDGASSEDLWETVQEAGMDSDAKTVLYDGRTGEPFDNRVSVGVMYMIKLHHMVDDKLHARSVGPYSLVTQQPLGGKAQFGGQRFGEMEVWALEAYGASNVLQEILTYKSDDVTGRLKAYEAITKGKPIPKPGVPESFRVLVKELQSLGLDMRVLDEDDNEVELRDLDEGEDDDVMHVDDLEKARVKQEAEEKQAEQVSEVVQED</sequence>
<dbReference type="EC" id="2.7.7.6" evidence="1"/>
<dbReference type="EMBL" id="CP000114">
    <property type="protein sequence ID" value="ABA45663.1"/>
    <property type="molecule type" value="Genomic_DNA"/>
</dbReference>
<dbReference type="RefSeq" id="WP_000907191.1">
    <property type="nucleotide sequence ID" value="NC_007432.1"/>
</dbReference>
<dbReference type="SMR" id="Q3K3L2"/>
<dbReference type="GeneID" id="66885141"/>
<dbReference type="KEGG" id="sak:SAK_0223"/>
<dbReference type="HOGENOM" id="CLU_000524_4_1_9"/>
<dbReference type="GO" id="GO:0000428">
    <property type="term" value="C:DNA-directed RNA polymerase complex"/>
    <property type="evidence" value="ECO:0007669"/>
    <property type="project" value="UniProtKB-KW"/>
</dbReference>
<dbReference type="GO" id="GO:0003677">
    <property type="term" value="F:DNA binding"/>
    <property type="evidence" value="ECO:0007669"/>
    <property type="project" value="UniProtKB-UniRule"/>
</dbReference>
<dbReference type="GO" id="GO:0003899">
    <property type="term" value="F:DNA-directed RNA polymerase activity"/>
    <property type="evidence" value="ECO:0007669"/>
    <property type="project" value="UniProtKB-UniRule"/>
</dbReference>
<dbReference type="GO" id="GO:0032549">
    <property type="term" value="F:ribonucleoside binding"/>
    <property type="evidence" value="ECO:0007669"/>
    <property type="project" value="InterPro"/>
</dbReference>
<dbReference type="GO" id="GO:0006351">
    <property type="term" value="P:DNA-templated transcription"/>
    <property type="evidence" value="ECO:0007669"/>
    <property type="project" value="UniProtKB-UniRule"/>
</dbReference>
<dbReference type="CDD" id="cd00653">
    <property type="entry name" value="RNA_pol_B_RPB2"/>
    <property type="match status" value="1"/>
</dbReference>
<dbReference type="Gene3D" id="2.40.50.100">
    <property type="match status" value="1"/>
</dbReference>
<dbReference type="Gene3D" id="2.40.50.150">
    <property type="match status" value="1"/>
</dbReference>
<dbReference type="Gene3D" id="3.90.1100.10">
    <property type="match status" value="1"/>
</dbReference>
<dbReference type="Gene3D" id="2.30.150.10">
    <property type="entry name" value="DNA-directed RNA polymerase, beta subunit, external 1 domain"/>
    <property type="match status" value="1"/>
</dbReference>
<dbReference type="Gene3D" id="2.40.270.10">
    <property type="entry name" value="DNA-directed RNA polymerase, subunit 2, domain 6"/>
    <property type="match status" value="1"/>
</dbReference>
<dbReference type="Gene3D" id="3.90.1800.10">
    <property type="entry name" value="RNA polymerase alpha subunit dimerisation domain"/>
    <property type="match status" value="1"/>
</dbReference>
<dbReference type="Gene3D" id="3.90.1110.10">
    <property type="entry name" value="RNA polymerase Rpb2, domain 2"/>
    <property type="match status" value="1"/>
</dbReference>
<dbReference type="HAMAP" id="MF_01321">
    <property type="entry name" value="RNApol_bact_RpoB"/>
    <property type="match status" value="1"/>
</dbReference>
<dbReference type="InterPro" id="IPR042107">
    <property type="entry name" value="DNA-dir_RNA_pol_bsu_ext_1_sf"/>
</dbReference>
<dbReference type="InterPro" id="IPR019462">
    <property type="entry name" value="DNA-dir_RNA_pol_bsu_external_1"/>
</dbReference>
<dbReference type="InterPro" id="IPR015712">
    <property type="entry name" value="DNA-dir_RNA_pol_su2"/>
</dbReference>
<dbReference type="InterPro" id="IPR007120">
    <property type="entry name" value="DNA-dir_RNAP_su2_dom"/>
</dbReference>
<dbReference type="InterPro" id="IPR037033">
    <property type="entry name" value="DNA-dir_RNAP_su2_hyb_sf"/>
</dbReference>
<dbReference type="InterPro" id="IPR010243">
    <property type="entry name" value="RNA_pol_bsu_bac"/>
</dbReference>
<dbReference type="InterPro" id="IPR007121">
    <property type="entry name" value="RNA_pol_bsu_CS"/>
</dbReference>
<dbReference type="InterPro" id="IPR007644">
    <property type="entry name" value="RNA_pol_bsu_protrusion"/>
</dbReference>
<dbReference type="InterPro" id="IPR007642">
    <property type="entry name" value="RNA_pol_Rpb2_2"/>
</dbReference>
<dbReference type="InterPro" id="IPR037034">
    <property type="entry name" value="RNA_pol_Rpb2_2_sf"/>
</dbReference>
<dbReference type="InterPro" id="IPR007645">
    <property type="entry name" value="RNA_pol_Rpb2_3"/>
</dbReference>
<dbReference type="InterPro" id="IPR007641">
    <property type="entry name" value="RNA_pol_Rpb2_7"/>
</dbReference>
<dbReference type="InterPro" id="IPR014724">
    <property type="entry name" value="RNA_pol_RPB2_OB-fold"/>
</dbReference>
<dbReference type="NCBIfam" id="NF001616">
    <property type="entry name" value="PRK00405.1"/>
    <property type="match status" value="1"/>
</dbReference>
<dbReference type="NCBIfam" id="TIGR02013">
    <property type="entry name" value="rpoB"/>
    <property type="match status" value="1"/>
</dbReference>
<dbReference type="PANTHER" id="PTHR20856">
    <property type="entry name" value="DNA-DIRECTED RNA POLYMERASE I SUBUNIT 2"/>
    <property type="match status" value="1"/>
</dbReference>
<dbReference type="Pfam" id="PF04563">
    <property type="entry name" value="RNA_pol_Rpb2_1"/>
    <property type="match status" value="1"/>
</dbReference>
<dbReference type="Pfam" id="PF04561">
    <property type="entry name" value="RNA_pol_Rpb2_2"/>
    <property type="match status" value="2"/>
</dbReference>
<dbReference type="Pfam" id="PF04565">
    <property type="entry name" value="RNA_pol_Rpb2_3"/>
    <property type="match status" value="1"/>
</dbReference>
<dbReference type="Pfam" id="PF10385">
    <property type="entry name" value="RNA_pol_Rpb2_45"/>
    <property type="match status" value="1"/>
</dbReference>
<dbReference type="Pfam" id="PF00562">
    <property type="entry name" value="RNA_pol_Rpb2_6"/>
    <property type="match status" value="1"/>
</dbReference>
<dbReference type="Pfam" id="PF04560">
    <property type="entry name" value="RNA_pol_Rpb2_7"/>
    <property type="match status" value="1"/>
</dbReference>
<dbReference type="SUPFAM" id="SSF64484">
    <property type="entry name" value="beta and beta-prime subunits of DNA dependent RNA-polymerase"/>
    <property type="match status" value="1"/>
</dbReference>
<dbReference type="PROSITE" id="PS01166">
    <property type="entry name" value="RNA_POL_BETA"/>
    <property type="match status" value="1"/>
</dbReference>
<feature type="chain" id="PRO_0000224109" description="DNA-directed RNA polymerase subunit beta">
    <location>
        <begin position="1"/>
        <end position="1191"/>
    </location>
</feature>
<feature type="region of interest" description="Disordered" evidence="2">
    <location>
        <begin position="1171"/>
        <end position="1191"/>
    </location>
</feature>
<feature type="compositionally biased region" description="Basic and acidic residues" evidence="2">
    <location>
        <begin position="1171"/>
        <end position="1181"/>
    </location>
</feature>
<feature type="compositionally biased region" description="Low complexity" evidence="2">
    <location>
        <begin position="1182"/>
        <end position="1191"/>
    </location>
</feature>
<reference key="1">
    <citation type="journal article" date="2005" name="Proc. Natl. Acad. Sci. U.S.A.">
        <title>Genome analysis of multiple pathogenic isolates of Streptococcus agalactiae: implications for the microbial 'pan-genome'.</title>
        <authorList>
            <person name="Tettelin H."/>
            <person name="Masignani V."/>
            <person name="Cieslewicz M.J."/>
            <person name="Donati C."/>
            <person name="Medini D."/>
            <person name="Ward N.L."/>
            <person name="Angiuoli S.V."/>
            <person name="Crabtree J."/>
            <person name="Jones A.L."/>
            <person name="Durkin A.S."/>
            <person name="DeBoy R.T."/>
            <person name="Davidsen T.M."/>
            <person name="Mora M."/>
            <person name="Scarselli M."/>
            <person name="Margarit y Ros I."/>
            <person name="Peterson J.D."/>
            <person name="Hauser C.R."/>
            <person name="Sundaram J.P."/>
            <person name="Nelson W.C."/>
            <person name="Madupu R."/>
            <person name="Brinkac L.M."/>
            <person name="Dodson R.J."/>
            <person name="Rosovitz M.J."/>
            <person name="Sullivan S.A."/>
            <person name="Daugherty S.C."/>
            <person name="Haft D.H."/>
            <person name="Selengut J."/>
            <person name="Gwinn M.L."/>
            <person name="Zhou L."/>
            <person name="Zafar N."/>
            <person name="Khouri H."/>
            <person name="Radune D."/>
            <person name="Dimitrov G."/>
            <person name="Watkins K."/>
            <person name="O'Connor K.J."/>
            <person name="Smith S."/>
            <person name="Utterback T.R."/>
            <person name="White O."/>
            <person name="Rubens C.E."/>
            <person name="Grandi G."/>
            <person name="Madoff L.C."/>
            <person name="Kasper D.L."/>
            <person name="Telford J.L."/>
            <person name="Wessels M.R."/>
            <person name="Rappuoli R."/>
            <person name="Fraser C.M."/>
        </authorList>
    </citation>
    <scope>NUCLEOTIDE SEQUENCE [LARGE SCALE GENOMIC DNA]</scope>
    <source>
        <strain>ATCC 27591 / A909 / CDC SS700</strain>
    </source>
</reference>
<proteinExistence type="inferred from homology"/>
<accession>Q3K3L2</accession>
<name>RPOB_STRA1</name>
<organism>
    <name type="scientific">Streptococcus agalactiae serotype Ia (strain ATCC 27591 / A909 / CDC SS700)</name>
    <dbReference type="NCBI Taxonomy" id="205921"/>
    <lineage>
        <taxon>Bacteria</taxon>
        <taxon>Bacillati</taxon>
        <taxon>Bacillota</taxon>
        <taxon>Bacilli</taxon>
        <taxon>Lactobacillales</taxon>
        <taxon>Streptococcaceae</taxon>
        <taxon>Streptococcus</taxon>
    </lineage>
</organism>